<protein>
    <recommendedName>
        <fullName evidence="1">Crossover junction endodeoxyribonuclease RuvC</fullName>
        <ecNumber evidence="1">3.1.21.10</ecNumber>
    </recommendedName>
    <alternativeName>
        <fullName evidence="1">Holliday junction nuclease RuvC</fullName>
    </alternativeName>
    <alternativeName>
        <fullName evidence="1">Holliday junction resolvase RuvC</fullName>
    </alternativeName>
</protein>
<comment type="function">
    <text evidence="1">The RuvA-RuvB-RuvC complex processes Holliday junction (HJ) DNA during genetic recombination and DNA repair. Endonuclease that resolves HJ intermediates. Cleaves cruciform DNA by making single-stranded nicks across the HJ at symmetrical positions within the homologous arms, yielding a 5'-phosphate and a 3'-hydroxyl group; requires a central core of homology in the junction. The consensus cleavage sequence is 5'-(A/T)TT(C/G)-3'. Cleavage occurs on the 3'-side of the TT dinucleotide at the point of strand exchange. HJ branch migration catalyzed by RuvA-RuvB allows RuvC to scan DNA until it finds its consensus sequence, where it cleaves and resolves the cruciform DNA.</text>
</comment>
<comment type="catalytic activity">
    <reaction evidence="1">
        <text>Endonucleolytic cleavage at a junction such as a reciprocal single-stranded crossover between two homologous DNA duplexes (Holliday junction).</text>
        <dbReference type="EC" id="3.1.21.10"/>
    </reaction>
</comment>
<comment type="cofactor">
    <cofactor evidence="1">
        <name>Mg(2+)</name>
        <dbReference type="ChEBI" id="CHEBI:18420"/>
    </cofactor>
    <text evidence="1">Binds 2 Mg(2+) ion per subunit.</text>
</comment>
<comment type="subunit">
    <text evidence="1">Homodimer which binds Holliday junction (HJ) DNA. The HJ becomes 2-fold symmetrical on binding to RuvC with unstacked arms; it has a different conformation from HJ DNA in complex with RuvA. In the full resolvosome a probable DNA-RuvA(4)-RuvB(12)-RuvC(2) complex forms which resolves the HJ.</text>
</comment>
<comment type="subcellular location">
    <subcellularLocation>
        <location evidence="1">Cytoplasm</location>
    </subcellularLocation>
</comment>
<comment type="similarity">
    <text evidence="1">Belongs to the RuvC family.</text>
</comment>
<keyword id="KW-0963">Cytoplasm</keyword>
<keyword id="KW-0227">DNA damage</keyword>
<keyword id="KW-0233">DNA recombination</keyword>
<keyword id="KW-0234">DNA repair</keyword>
<keyword id="KW-0238">DNA-binding</keyword>
<keyword id="KW-0255">Endonuclease</keyword>
<keyword id="KW-0378">Hydrolase</keyword>
<keyword id="KW-0460">Magnesium</keyword>
<keyword id="KW-0479">Metal-binding</keyword>
<keyword id="KW-0540">Nuclease</keyword>
<name>RUVC_CERS1</name>
<accession>A3PLU5</accession>
<dbReference type="EC" id="3.1.21.10" evidence="1"/>
<dbReference type="EMBL" id="CP000577">
    <property type="protein sequence ID" value="ABN77311.1"/>
    <property type="molecule type" value="Genomic_DNA"/>
</dbReference>
<dbReference type="RefSeq" id="WP_011841515.1">
    <property type="nucleotide sequence ID" value="NC_009049.1"/>
</dbReference>
<dbReference type="SMR" id="A3PLU5"/>
<dbReference type="KEGG" id="rsh:Rsph17029_2208"/>
<dbReference type="HOGENOM" id="CLU_091257_1_0_5"/>
<dbReference type="GO" id="GO:0005737">
    <property type="term" value="C:cytoplasm"/>
    <property type="evidence" value="ECO:0007669"/>
    <property type="project" value="UniProtKB-SubCell"/>
</dbReference>
<dbReference type="GO" id="GO:0048476">
    <property type="term" value="C:Holliday junction resolvase complex"/>
    <property type="evidence" value="ECO:0007669"/>
    <property type="project" value="UniProtKB-UniRule"/>
</dbReference>
<dbReference type="GO" id="GO:0008821">
    <property type="term" value="F:crossover junction DNA endonuclease activity"/>
    <property type="evidence" value="ECO:0007669"/>
    <property type="project" value="UniProtKB-UniRule"/>
</dbReference>
<dbReference type="GO" id="GO:0003677">
    <property type="term" value="F:DNA binding"/>
    <property type="evidence" value="ECO:0007669"/>
    <property type="project" value="UniProtKB-KW"/>
</dbReference>
<dbReference type="GO" id="GO:0000287">
    <property type="term" value="F:magnesium ion binding"/>
    <property type="evidence" value="ECO:0007669"/>
    <property type="project" value="UniProtKB-UniRule"/>
</dbReference>
<dbReference type="GO" id="GO:0006310">
    <property type="term" value="P:DNA recombination"/>
    <property type="evidence" value="ECO:0007669"/>
    <property type="project" value="UniProtKB-UniRule"/>
</dbReference>
<dbReference type="GO" id="GO:0006281">
    <property type="term" value="P:DNA repair"/>
    <property type="evidence" value="ECO:0007669"/>
    <property type="project" value="UniProtKB-UniRule"/>
</dbReference>
<dbReference type="CDD" id="cd16962">
    <property type="entry name" value="RuvC"/>
    <property type="match status" value="1"/>
</dbReference>
<dbReference type="FunFam" id="3.30.420.10:FF:000002">
    <property type="entry name" value="Crossover junction endodeoxyribonuclease RuvC"/>
    <property type="match status" value="1"/>
</dbReference>
<dbReference type="Gene3D" id="3.30.420.10">
    <property type="entry name" value="Ribonuclease H-like superfamily/Ribonuclease H"/>
    <property type="match status" value="1"/>
</dbReference>
<dbReference type="HAMAP" id="MF_00034">
    <property type="entry name" value="RuvC"/>
    <property type="match status" value="1"/>
</dbReference>
<dbReference type="InterPro" id="IPR012337">
    <property type="entry name" value="RNaseH-like_sf"/>
</dbReference>
<dbReference type="InterPro" id="IPR036397">
    <property type="entry name" value="RNaseH_sf"/>
</dbReference>
<dbReference type="InterPro" id="IPR020563">
    <property type="entry name" value="X-over_junc_endoDNase_Mg_BS"/>
</dbReference>
<dbReference type="InterPro" id="IPR002176">
    <property type="entry name" value="X-over_junc_endoDNase_RuvC"/>
</dbReference>
<dbReference type="NCBIfam" id="TIGR00228">
    <property type="entry name" value="ruvC"/>
    <property type="match status" value="1"/>
</dbReference>
<dbReference type="PANTHER" id="PTHR30194">
    <property type="entry name" value="CROSSOVER JUNCTION ENDODEOXYRIBONUCLEASE RUVC"/>
    <property type="match status" value="1"/>
</dbReference>
<dbReference type="PANTHER" id="PTHR30194:SF3">
    <property type="entry name" value="CROSSOVER JUNCTION ENDODEOXYRIBONUCLEASE RUVC"/>
    <property type="match status" value="1"/>
</dbReference>
<dbReference type="Pfam" id="PF02075">
    <property type="entry name" value="RuvC"/>
    <property type="match status" value="1"/>
</dbReference>
<dbReference type="PRINTS" id="PR00696">
    <property type="entry name" value="RSOLVASERUVC"/>
</dbReference>
<dbReference type="SUPFAM" id="SSF53098">
    <property type="entry name" value="Ribonuclease H-like"/>
    <property type="match status" value="1"/>
</dbReference>
<dbReference type="PROSITE" id="PS01321">
    <property type="entry name" value="RUVC"/>
    <property type="match status" value="1"/>
</dbReference>
<evidence type="ECO:0000255" key="1">
    <source>
        <dbReference type="HAMAP-Rule" id="MF_00034"/>
    </source>
</evidence>
<proteinExistence type="inferred from homology"/>
<sequence length="168" mass="17396">MRVLGIDPGLRNMGWGVIDVSGTRLAHVANGICHSDSGDLAQRLLSLHGQLTDVLARFQPDTAAVEHTFVNKDGVATLKLGQARGIALLVPAQAGLAVGEYAPNAVKKTVVGVGHAAKEQIQHMVRLHLPGVALAGPDAADALAVAICHAHHVQSSGRLEAALARAAR</sequence>
<gene>
    <name evidence="1" type="primary">ruvC</name>
    <name type="ordered locus">Rsph17029_2208</name>
</gene>
<organism>
    <name type="scientific">Cereibacter sphaeroides (strain ATCC 17029 / ATH 2.4.9)</name>
    <name type="common">Rhodobacter sphaeroides</name>
    <dbReference type="NCBI Taxonomy" id="349101"/>
    <lineage>
        <taxon>Bacteria</taxon>
        <taxon>Pseudomonadati</taxon>
        <taxon>Pseudomonadota</taxon>
        <taxon>Alphaproteobacteria</taxon>
        <taxon>Rhodobacterales</taxon>
        <taxon>Paracoccaceae</taxon>
        <taxon>Cereibacter</taxon>
    </lineage>
</organism>
<feature type="chain" id="PRO_1000002815" description="Crossover junction endodeoxyribonuclease RuvC">
    <location>
        <begin position="1"/>
        <end position="168"/>
    </location>
</feature>
<feature type="active site" evidence="1">
    <location>
        <position position="7"/>
    </location>
</feature>
<feature type="active site" evidence="1">
    <location>
        <position position="66"/>
    </location>
</feature>
<feature type="active site" evidence="1">
    <location>
        <position position="138"/>
    </location>
</feature>
<feature type="binding site" evidence="1">
    <location>
        <position position="7"/>
    </location>
    <ligand>
        <name>Mg(2+)</name>
        <dbReference type="ChEBI" id="CHEBI:18420"/>
        <label>1</label>
    </ligand>
</feature>
<feature type="binding site" evidence="1">
    <location>
        <position position="66"/>
    </location>
    <ligand>
        <name>Mg(2+)</name>
        <dbReference type="ChEBI" id="CHEBI:18420"/>
        <label>2</label>
    </ligand>
</feature>
<feature type="binding site" evidence="1">
    <location>
        <position position="138"/>
    </location>
    <ligand>
        <name>Mg(2+)</name>
        <dbReference type="ChEBI" id="CHEBI:18420"/>
        <label>1</label>
    </ligand>
</feature>
<reference key="1">
    <citation type="submission" date="2007-02" db="EMBL/GenBank/DDBJ databases">
        <title>Complete sequence of chromosome 1 of Rhodobacter sphaeroides ATCC 17029.</title>
        <authorList>
            <person name="Copeland A."/>
            <person name="Lucas S."/>
            <person name="Lapidus A."/>
            <person name="Barry K."/>
            <person name="Detter J.C."/>
            <person name="Glavina del Rio T."/>
            <person name="Hammon N."/>
            <person name="Israni S."/>
            <person name="Dalin E."/>
            <person name="Tice H."/>
            <person name="Pitluck S."/>
            <person name="Kiss H."/>
            <person name="Brettin T."/>
            <person name="Bruce D."/>
            <person name="Han C."/>
            <person name="Tapia R."/>
            <person name="Gilna P."/>
            <person name="Schmutz J."/>
            <person name="Larimer F."/>
            <person name="Land M."/>
            <person name="Hauser L."/>
            <person name="Kyrpides N."/>
            <person name="Mikhailova N."/>
            <person name="Richardson P."/>
            <person name="Mackenzie C."/>
            <person name="Choudhary M."/>
            <person name="Donohue T.J."/>
            <person name="Kaplan S."/>
        </authorList>
    </citation>
    <scope>NUCLEOTIDE SEQUENCE [LARGE SCALE GENOMIC DNA]</scope>
    <source>
        <strain>ATCC 17029 / ATH 2.4.9</strain>
    </source>
</reference>